<reference key="1">
    <citation type="submission" date="2007-04" db="EMBL/GenBank/DDBJ databases">
        <title>Genome sequence of the thermophilic hydrogen-producing bacterium Caldicellulosiruptor saccharolyticus DSM 8903.</title>
        <authorList>
            <person name="Copeland A."/>
            <person name="Lucas S."/>
            <person name="Lapidus A."/>
            <person name="Barry K."/>
            <person name="Detter J.C."/>
            <person name="Glavina del Rio T."/>
            <person name="Hammon N."/>
            <person name="Israni S."/>
            <person name="Dalin E."/>
            <person name="Tice H."/>
            <person name="Pitluck S."/>
            <person name="Kiss H."/>
            <person name="Brettin T."/>
            <person name="Bruce D."/>
            <person name="Han C."/>
            <person name="Schmutz J."/>
            <person name="Larimer F."/>
            <person name="Land M."/>
            <person name="Hauser L."/>
            <person name="Kyrpides N."/>
            <person name="Lykidis A."/>
            <person name="van de Werken H.J.G."/>
            <person name="Verhaart M.R.A."/>
            <person name="VanFossen A.L."/>
            <person name="Lewis D.L."/>
            <person name="Nichols J.D."/>
            <person name="Goorissen H.P."/>
            <person name="van Niel E.W.J."/>
            <person name="Stams F.J.M."/>
            <person name="Willquist K.U."/>
            <person name="Ward D.E."/>
            <person name="van der Oost J."/>
            <person name="Kelly R.M."/>
            <person name="Kengen S.M.W."/>
            <person name="Richardson P."/>
        </authorList>
    </citation>
    <scope>NUCLEOTIDE SEQUENCE [LARGE SCALE GENOMIC DNA]</scope>
    <source>
        <strain>ATCC 43494 / DSM 8903 / Tp8T 6331</strain>
    </source>
</reference>
<proteinExistence type="inferred from homology"/>
<evidence type="ECO:0000255" key="1">
    <source>
        <dbReference type="HAMAP-Rule" id="MF_01595"/>
    </source>
</evidence>
<gene>
    <name evidence="1" type="primary">pnp</name>
    <name type="ordered locus">Csac_2064</name>
</gene>
<keyword id="KW-0963">Cytoplasm</keyword>
<keyword id="KW-0460">Magnesium</keyword>
<keyword id="KW-0479">Metal-binding</keyword>
<keyword id="KW-0548">Nucleotidyltransferase</keyword>
<keyword id="KW-0694">RNA-binding</keyword>
<keyword id="KW-0808">Transferase</keyword>
<accession>A4XL64</accession>
<comment type="function">
    <text evidence="1">Involved in mRNA degradation. Catalyzes the phosphorolysis of single-stranded polyribonucleotides processively in the 3'- to 5'-direction.</text>
</comment>
<comment type="catalytic activity">
    <reaction evidence="1">
        <text>RNA(n+1) + phosphate = RNA(n) + a ribonucleoside 5'-diphosphate</text>
        <dbReference type="Rhea" id="RHEA:22096"/>
        <dbReference type="Rhea" id="RHEA-COMP:14527"/>
        <dbReference type="Rhea" id="RHEA-COMP:17342"/>
        <dbReference type="ChEBI" id="CHEBI:43474"/>
        <dbReference type="ChEBI" id="CHEBI:57930"/>
        <dbReference type="ChEBI" id="CHEBI:140395"/>
        <dbReference type="EC" id="2.7.7.8"/>
    </reaction>
</comment>
<comment type="cofactor">
    <cofactor evidence="1">
        <name>Mg(2+)</name>
        <dbReference type="ChEBI" id="CHEBI:18420"/>
    </cofactor>
</comment>
<comment type="subcellular location">
    <subcellularLocation>
        <location evidence="1">Cytoplasm</location>
    </subcellularLocation>
</comment>
<comment type="similarity">
    <text evidence="1">Belongs to the polyribonucleotide nucleotidyltransferase family.</text>
</comment>
<feature type="chain" id="PRO_0000329566" description="Polyribonucleotide nucleotidyltransferase">
    <location>
        <begin position="1"/>
        <end position="701"/>
    </location>
</feature>
<feature type="domain" description="KH" evidence="1">
    <location>
        <begin position="552"/>
        <end position="611"/>
    </location>
</feature>
<feature type="domain" description="S1 motif" evidence="1">
    <location>
        <begin position="621"/>
        <end position="689"/>
    </location>
</feature>
<feature type="binding site" evidence="1">
    <location>
        <position position="485"/>
    </location>
    <ligand>
        <name>Mg(2+)</name>
        <dbReference type="ChEBI" id="CHEBI:18420"/>
    </ligand>
</feature>
<feature type="binding site" evidence="1">
    <location>
        <position position="491"/>
    </location>
    <ligand>
        <name>Mg(2+)</name>
        <dbReference type="ChEBI" id="CHEBI:18420"/>
    </ligand>
</feature>
<sequence length="701" mass="77604">MESKIYKMELAGRELSFEIGKYALLANGAVLARYGDTAVLVTACASEKPREGINFFPLTVDYEERLYSVGKIPGGFIKREGKPSEKAILSARLIDRPIRPLFPKDFYHDVSVIATVLSVDPDNPPDVLAMLGSSVALSISDIPFEGPTGSVLVGYVDGKIVINPTAKEREVSKLHLVVSGTKDKVMMIEAGAQEIPEDIMLEAIMTAQEEIKKIVEFIEGIVKEVGKPKMQYEKRVVPEEIKQKVRELAYEKAYQYVQIPDKIERDKKLDELKEEVLKAFEGETEDTLLLVDDALYNLEKEIVRKMIAEEGKRPDGRKFDEIRPLYAEVGILPRTHGSALFKRGYTQVLTVATLGTKGEMQFLDGLEEEEAKRYMHHYNFPPYSTGESKPVRGPGRREIGHGALAERALEPVIPSEDEFPYTIRLVSEVLTSNGSTSQASVCGSTLALMDAGVPIKAPVAGISIGLITKEDGSFITLTDIQGIEDFFGDMDFKVAGTREGITAIQLDIKIHGLTKEIIEKALYQAREARLKILDFMQTVIDKPRSELSPYAPKIFKTTVDPEKIRDIIGPGGKMINKIIAKTNVKIDIEPDGRIFVAAPDDISGNRAISMIEGIGREIEVGQFFLGKVTRTASYGAFVEIYPGKEGLVHISQLDNKKLKSVDEVVKVGDLVLVKVIGIDRLGRIALSRKEALNVTYSRKAK</sequence>
<name>PNP_CALS8</name>
<organism>
    <name type="scientific">Caldicellulosiruptor saccharolyticus (strain ATCC 43494 / DSM 8903 / Tp8T 6331)</name>
    <dbReference type="NCBI Taxonomy" id="351627"/>
    <lineage>
        <taxon>Bacteria</taxon>
        <taxon>Bacillati</taxon>
        <taxon>Bacillota</taxon>
        <taxon>Bacillota incertae sedis</taxon>
        <taxon>Caldicellulosiruptorales</taxon>
        <taxon>Caldicellulosiruptoraceae</taxon>
        <taxon>Caldicellulosiruptor</taxon>
    </lineage>
</organism>
<protein>
    <recommendedName>
        <fullName evidence="1">Polyribonucleotide nucleotidyltransferase</fullName>
        <ecNumber evidence="1">2.7.7.8</ecNumber>
    </recommendedName>
    <alternativeName>
        <fullName evidence="1">Polynucleotide phosphorylase</fullName>
        <shortName evidence="1">PNPase</shortName>
    </alternativeName>
</protein>
<dbReference type="EC" id="2.7.7.8" evidence="1"/>
<dbReference type="EMBL" id="CP000679">
    <property type="protein sequence ID" value="ABP67649.1"/>
    <property type="molecule type" value="Genomic_DNA"/>
</dbReference>
<dbReference type="RefSeq" id="WP_011917584.1">
    <property type="nucleotide sequence ID" value="NC_009437.1"/>
</dbReference>
<dbReference type="SMR" id="A4XL64"/>
<dbReference type="STRING" id="351627.Csac_2064"/>
<dbReference type="KEGG" id="csc:Csac_2064"/>
<dbReference type="eggNOG" id="COG1185">
    <property type="taxonomic scope" value="Bacteria"/>
</dbReference>
<dbReference type="HOGENOM" id="CLU_004217_2_2_9"/>
<dbReference type="OrthoDB" id="9804305at2"/>
<dbReference type="Proteomes" id="UP000000256">
    <property type="component" value="Chromosome"/>
</dbReference>
<dbReference type="GO" id="GO:0005829">
    <property type="term" value="C:cytosol"/>
    <property type="evidence" value="ECO:0007669"/>
    <property type="project" value="TreeGrafter"/>
</dbReference>
<dbReference type="GO" id="GO:0000175">
    <property type="term" value="F:3'-5'-RNA exonuclease activity"/>
    <property type="evidence" value="ECO:0007669"/>
    <property type="project" value="TreeGrafter"/>
</dbReference>
<dbReference type="GO" id="GO:0000287">
    <property type="term" value="F:magnesium ion binding"/>
    <property type="evidence" value="ECO:0007669"/>
    <property type="project" value="UniProtKB-UniRule"/>
</dbReference>
<dbReference type="GO" id="GO:0004654">
    <property type="term" value="F:polyribonucleotide nucleotidyltransferase activity"/>
    <property type="evidence" value="ECO:0007669"/>
    <property type="project" value="UniProtKB-UniRule"/>
</dbReference>
<dbReference type="GO" id="GO:0003723">
    <property type="term" value="F:RNA binding"/>
    <property type="evidence" value="ECO:0007669"/>
    <property type="project" value="UniProtKB-UniRule"/>
</dbReference>
<dbReference type="GO" id="GO:0006402">
    <property type="term" value="P:mRNA catabolic process"/>
    <property type="evidence" value="ECO:0007669"/>
    <property type="project" value="UniProtKB-UniRule"/>
</dbReference>
<dbReference type="GO" id="GO:0006396">
    <property type="term" value="P:RNA processing"/>
    <property type="evidence" value="ECO:0007669"/>
    <property type="project" value="InterPro"/>
</dbReference>
<dbReference type="CDD" id="cd02393">
    <property type="entry name" value="KH-I_PNPase"/>
    <property type="match status" value="1"/>
</dbReference>
<dbReference type="CDD" id="cd11363">
    <property type="entry name" value="RNase_PH_PNPase_1"/>
    <property type="match status" value="1"/>
</dbReference>
<dbReference type="CDD" id="cd11364">
    <property type="entry name" value="RNase_PH_PNPase_2"/>
    <property type="match status" value="1"/>
</dbReference>
<dbReference type="CDD" id="cd04472">
    <property type="entry name" value="S1_PNPase"/>
    <property type="match status" value="1"/>
</dbReference>
<dbReference type="FunFam" id="3.30.1370.10:FF:000001">
    <property type="entry name" value="Polyribonucleotide nucleotidyltransferase"/>
    <property type="match status" value="1"/>
</dbReference>
<dbReference type="FunFam" id="3.30.230.70:FF:000001">
    <property type="entry name" value="Polyribonucleotide nucleotidyltransferase"/>
    <property type="match status" value="1"/>
</dbReference>
<dbReference type="FunFam" id="3.30.230.70:FF:000002">
    <property type="entry name" value="Polyribonucleotide nucleotidyltransferase"/>
    <property type="match status" value="1"/>
</dbReference>
<dbReference type="FunFam" id="2.40.50.140:FF:000189">
    <property type="entry name" value="Polyribonucleotide nucleotidyltransferase, putative"/>
    <property type="match status" value="1"/>
</dbReference>
<dbReference type="Gene3D" id="3.30.230.70">
    <property type="entry name" value="GHMP Kinase, N-terminal domain"/>
    <property type="match status" value="2"/>
</dbReference>
<dbReference type="Gene3D" id="3.30.1370.10">
    <property type="entry name" value="K Homology domain, type 1"/>
    <property type="match status" value="1"/>
</dbReference>
<dbReference type="Gene3D" id="2.40.50.140">
    <property type="entry name" value="Nucleic acid-binding proteins"/>
    <property type="match status" value="1"/>
</dbReference>
<dbReference type="HAMAP" id="MF_01595">
    <property type="entry name" value="PNPase"/>
    <property type="match status" value="1"/>
</dbReference>
<dbReference type="InterPro" id="IPR001247">
    <property type="entry name" value="ExoRNase_PH_dom1"/>
</dbReference>
<dbReference type="InterPro" id="IPR015847">
    <property type="entry name" value="ExoRNase_PH_dom2"/>
</dbReference>
<dbReference type="InterPro" id="IPR036345">
    <property type="entry name" value="ExoRNase_PH_dom2_sf"/>
</dbReference>
<dbReference type="InterPro" id="IPR004087">
    <property type="entry name" value="KH_dom"/>
</dbReference>
<dbReference type="InterPro" id="IPR004088">
    <property type="entry name" value="KH_dom_type_1"/>
</dbReference>
<dbReference type="InterPro" id="IPR036612">
    <property type="entry name" value="KH_dom_type_1_sf"/>
</dbReference>
<dbReference type="InterPro" id="IPR012340">
    <property type="entry name" value="NA-bd_OB-fold"/>
</dbReference>
<dbReference type="InterPro" id="IPR012162">
    <property type="entry name" value="PNPase"/>
</dbReference>
<dbReference type="InterPro" id="IPR027408">
    <property type="entry name" value="PNPase/RNase_PH_dom_sf"/>
</dbReference>
<dbReference type="InterPro" id="IPR015848">
    <property type="entry name" value="PNPase_PH_RNA-bd_bac/org-type"/>
</dbReference>
<dbReference type="InterPro" id="IPR036456">
    <property type="entry name" value="PNPase_PH_RNA-bd_sf"/>
</dbReference>
<dbReference type="InterPro" id="IPR020568">
    <property type="entry name" value="Ribosomal_Su5_D2-typ_SF"/>
</dbReference>
<dbReference type="InterPro" id="IPR003029">
    <property type="entry name" value="S1_domain"/>
</dbReference>
<dbReference type="NCBIfam" id="TIGR03591">
    <property type="entry name" value="polynuc_phos"/>
    <property type="match status" value="1"/>
</dbReference>
<dbReference type="NCBIfam" id="NF008805">
    <property type="entry name" value="PRK11824.1"/>
    <property type="match status" value="1"/>
</dbReference>
<dbReference type="PANTHER" id="PTHR11252">
    <property type="entry name" value="POLYRIBONUCLEOTIDE NUCLEOTIDYLTRANSFERASE"/>
    <property type="match status" value="1"/>
</dbReference>
<dbReference type="PANTHER" id="PTHR11252:SF0">
    <property type="entry name" value="POLYRIBONUCLEOTIDE NUCLEOTIDYLTRANSFERASE 1, MITOCHONDRIAL"/>
    <property type="match status" value="1"/>
</dbReference>
<dbReference type="Pfam" id="PF00013">
    <property type="entry name" value="KH_1"/>
    <property type="match status" value="1"/>
</dbReference>
<dbReference type="Pfam" id="PF03726">
    <property type="entry name" value="PNPase"/>
    <property type="match status" value="1"/>
</dbReference>
<dbReference type="Pfam" id="PF01138">
    <property type="entry name" value="RNase_PH"/>
    <property type="match status" value="2"/>
</dbReference>
<dbReference type="Pfam" id="PF03725">
    <property type="entry name" value="RNase_PH_C"/>
    <property type="match status" value="2"/>
</dbReference>
<dbReference type="Pfam" id="PF00575">
    <property type="entry name" value="S1"/>
    <property type="match status" value="1"/>
</dbReference>
<dbReference type="PIRSF" id="PIRSF005499">
    <property type="entry name" value="PNPase"/>
    <property type="match status" value="1"/>
</dbReference>
<dbReference type="SMART" id="SM00322">
    <property type="entry name" value="KH"/>
    <property type="match status" value="1"/>
</dbReference>
<dbReference type="SMART" id="SM00316">
    <property type="entry name" value="S1"/>
    <property type="match status" value="1"/>
</dbReference>
<dbReference type="SUPFAM" id="SSF54791">
    <property type="entry name" value="Eukaryotic type KH-domain (KH-domain type I)"/>
    <property type="match status" value="1"/>
</dbReference>
<dbReference type="SUPFAM" id="SSF50249">
    <property type="entry name" value="Nucleic acid-binding proteins"/>
    <property type="match status" value="1"/>
</dbReference>
<dbReference type="SUPFAM" id="SSF46915">
    <property type="entry name" value="Polynucleotide phosphorylase/guanosine pentaphosphate synthase (PNPase/GPSI), domain 3"/>
    <property type="match status" value="1"/>
</dbReference>
<dbReference type="SUPFAM" id="SSF55666">
    <property type="entry name" value="Ribonuclease PH domain 2-like"/>
    <property type="match status" value="2"/>
</dbReference>
<dbReference type="SUPFAM" id="SSF54211">
    <property type="entry name" value="Ribosomal protein S5 domain 2-like"/>
    <property type="match status" value="2"/>
</dbReference>
<dbReference type="PROSITE" id="PS50084">
    <property type="entry name" value="KH_TYPE_1"/>
    <property type="match status" value="1"/>
</dbReference>
<dbReference type="PROSITE" id="PS50126">
    <property type="entry name" value="S1"/>
    <property type="match status" value="1"/>
</dbReference>